<protein>
    <recommendedName>
        <fullName>Histone H4</fullName>
    </recommendedName>
</protein>
<dbReference type="EMBL" id="X02916">
    <property type="protein sequence ID" value="CAA26672.1"/>
    <property type="molecule type" value="Genomic_DNA"/>
</dbReference>
<dbReference type="PIR" id="A24552">
    <property type="entry name" value="HSTR4"/>
</dbReference>
<dbReference type="RefSeq" id="XP_036804281.1">
    <property type="nucleotide sequence ID" value="XM_036948386.1"/>
</dbReference>
<dbReference type="RefSeq" id="XP_036805813.1">
    <property type="nucleotide sequence ID" value="XM_036949918.1"/>
</dbReference>
<dbReference type="RefSeq" id="XP_036805835.1">
    <property type="nucleotide sequence ID" value="XM_036949940.1"/>
</dbReference>
<dbReference type="RefSeq" id="XP_036805836.1">
    <property type="nucleotide sequence ID" value="XM_036949941.1"/>
</dbReference>
<dbReference type="RefSeq" id="XP_036805837.1">
    <property type="nucleotide sequence ID" value="XM_036949942.1"/>
</dbReference>
<dbReference type="RefSeq" id="XP_036830078.1">
    <property type="nucleotide sequence ID" value="XM_036974183.1"/>
</dbReference>
<dbReference type="RefSeq" id="XP_036830079.1">
    <property type="nucleotide sequence ID" value="XM_036974184.1"/>
</dbReference>
<dbReference type="RefSeq" id="XP_036830086.1">
    <property type="nucleotide sequence ID" value="XM_036974191.1"/>
</dbReference>
<dbReference type="RefSeq" id="XP_036830088.1">
    <property type="nucleotide sequence ID" value="XM_036974193.1"/>
</dbReference>
<dbReference type="RefSeq" id="XP_036830132.1">
    <property type="nucleotide sequence ID" value="XM_036974237.1"/>
</dbReference>
<dbReference type="RefSeq" id="XP_036830145.1">
    <property type="nucleotide sequence ID" value="XM_036974250.1"/>
</dbReference>
<dbReference type="RefSeq" id="XP_036830165.1">
    <property type="nucleotide sequence ID" value="XM_036974270.1"/>
</dbReference>
<dbReference type="RefSeq" id="XP_036830166.1">
    <property type="nucleotide sequence ID" value="XM_036974271.1"/>
</dbReference>
<dbReference type="SMR" id="P62797"/>
<dbReference type="iPTMnet" id="P62797"/>
<dbReference type="GeneID" id="118940128"/>
<dbReference type="GeneID" id="118940434"/>
<dbReference type="GeneID" id="118940456"/>
<dbReference type="GeneID" id="118940457"/>
<dbReference type="GeneID" id="118940458"/>
<dbReference type="GeneID" id="118956110"/>
<dbReference type="GeneID" id="118956111"/>
<dbReference type="GeneID" id="118956118"/>
<dbReference type="GeneID" id="118956120"/>
<dbReference type="GeneID" id="118956942"/>
<dbReference type="GeneID" id="118956957"/>
<dbReference type="GeneID" id="118956977"/>
<dbReference type="GeneID" id="118956978"/>
<dbReference type="OrthoDB" id="9948295at2759"/>
<dbReference type="Proteomes" id="UP000694395">
    <property type="component" value="Unplaced"/>
</dbReference>
<dbReference type="GO" id="GO:0000786">
    <property type="term" value="C:nucleosome"/>
    <property type="evidence" value="ECO:0007669"/>
    <property type="project" value="UniProtKB-KW"/>
</dbReference>
<dbReference type="GO" id="GO:0005634">
    <property type="term" value="C:nucleus"/>
    <property type="evidence" value="ECO:0007669"/>
    <property type="project" value="UniProtKB-SubCell"/>
</dbReference>
<dbReference type="GO" id="GO:0031490">
    <property type="term" value="F:chromatin DNA binding"/>
    <property type="evidence" value="ECO:0000315"/>
    <property type="project" value="AgBase"/>
</dbReference>
<dbReference type="GO" id="GO:0000987">
    <property type="term" value="F:cis-regulatory region sequence-specific DNA binding"/>
    <property type="evidence" value="ECO:0000315"/>
    <property type="project" value="AgBase"/>
</dbReference>
<dbReference type="GO" id="GO:0046982">
    <property type="term" value="F:protein heterodimerization activity"/>
    <property type="evidence" value="ECO:0007669"/>
    <property type="project" value="InterPro"/>
</dbReference>
<dbReference type="GO" id="GO:0030527">
    <property type="term" value="F:structural constituent of chromatin"/>
    <property type="evidence" value="ECO:0007669"/>
    <property type="project" value="InterPro"/>
</dbReference>
<dbReference type="CDD" id="cd22912">
    <property type="entry name" value="HFD_H4"/>
    <property type="match status" value="1"/>
</dbReference>
<dbReference type="FunFam" id="1.10.20.10:FF:000002">
    <property type="entry name" value="Histone H4"/>
    <property type="match status" value="1"/>
</dbReference>
<dbReference type="Gene3D" id="1.10.20.10">
    <property type="entry name" value="Histone, subunit A"/>
    <property type="match status" value="1"/>
</dbReference>
<dbReference type="InterPro" id="IPR035425">
    <property type="entry name" value="CENP-T/H4_C"/>
</dbReference>
<dbReference type="InterPro" id="IPR009072">
    <property type="entry name" value="Histone-fold"/>
</dbReference>
<dbReference type="InterPro" id="IPR001951">
    <property type="entry name" value="Histone_H4"/>
</dbReference>
<dbReference type="InterPro" id="IPR019809">
    <property type="entry name" value="Histone_H4_CS"/>
</dbReference>
<dbReference type="InterPro" id="IPR004823">
    <property type="entry name" value="TAF_TATA-bd_Histone-like_dom"/>
</dbReference>
<dbReference type="PANTHER" id="PTHR10484">
    <property type="entry name" value="HISTONE H4"/>
    <property type="match status" value="1"/>
</dbReference>
<dbReference type="Pfam" id="PF15511">
    <property type="entry name" value="CENP-T_C"/>
    <property type="match status" value="1"/>
</dbReference>
<dbReference type="PRINTS" id="PR00623">
    <property type="entry name" value="HISTONEH4"/>
</dbReference>
<dbReference type="SMART" id="SM00417">
    <property type="entry name" value="H4"/>
    <property type="match status" value="1"/>
</dbReference>
<dbReference type="SMART" id="SM00803">
    <property type="entry name" value="TAF"/>
    <property type="match status" value="1"/>
</dbReference>
<dbReference type="SUPFAM" id="SSF47113">
    <property type="entry name" value="Histone-fold"/>
    <property type="match status" value="1"/>
</dbReference>
<dbReference type="PROSITE" id="PS00047">
    <property type="entry name" value="HISTONE_H4"/>
    <property type="match status" value="1"/>
</dbReference>
<evidence type="ECO:0000250" key="1">
    <source>
        <dbReference type="UniProtKB" id="P62805"/>
    </source>
</evidence>
<evidence type="ECO:0000250" key="2">
    <source>
        <dbReference type="UniProtKB" id="P62806"/>
    </source>
</evidence>
<evidence type="ECO:0000256" key="3">
    <source>
        <dbReference type="SAM" id="MobiDB-lite"/>
    </source>
</evidence>
<evidence type="ECO:0000269" key="4">
    <source>
    </source>
</evidence>
<evidence type="ECO:0000305" key="5"/>
<sequence length="103" mass="11367">MSGRGKGGKGLGKGGAKRHRKVLRDNIQGITKPAIRRLARRGGVKRISGLIYEETRGVLKVFLENVIRDAVTYTEHAKRKTVTAMDVVYALKRQGRTLYGFGG</sequence>
<proteinExistence type="evidence at protein level"/>
<feature type="initiator methionine" description="Removed" evidence="4">
    <location>
        <position position="1"/>
    </location>
</feature>
<feature type="chain" id="PRO_0000158338" description="Histone H4">
    <location>
        <begin position="2"/>
        <end position="103"/>
    </location>
</feature>
<feature type="DNA-binding region">
    <location>
        <begin position="17"/>
        <end position="21"/>
    </location>
</feature>
<feature type="region of interest" description="Disordered" evidence="3">
    <location>
        <begin position="1"/>
        <end position="20"/>
    </location>
</feature>
<feature type="compositionally biased region" description="Gly residues" evidence="3">
    <location>
        <begin position="1"/>
        <end position="14"/>
    </location>
</feature>
<feature type="modified residue" description="N-acetylserine" evidence="4">
    <location>
        <position position="2"/>
    </location>
</feature>
<feature type="modified residue" description="Phosphoserine" evidence="1">
    <location>
        <position position="2"/>
    </location>
</feature>
<feature type="modified residue" description="Asymmetric dimethylarginine; by PRMT1; alternate" evidence="1">
    <location>
        <position position="4"/>
    </location>
</feature>
<feature type="modified residue" description="Citrulline; alternate" evidence="1">
    <location>
        <position position="4"/>
    </location>
</feature>
<feature type="modified residue" description="Omega-N-methylarginine; by PRMT1; alternate" evidence="1">
    <location>
        <position position="4"/>
    </location>
</feature>
<feature type="modified residue" description="Symmetric dimethylarginine; by PRMT5 and PRMT7; alternate" evidence="1">
    <location>
        <position position="4"/>
    </location>
</feature>
<feature type="modified residue" description="N6-(2-hydroxyisobutyryl)lysine; alternate" evidence="1">
    <location>
        <position position="6"/>
    </location>
</feature>
<feature type="modified residue" description="N6-acetyl-N6-methyllysine; alternate" evidence="1">
    <location>
        <position position="6"/>
    </location>
</feature>
<feature type="modified residue" description="N6-acetyllysine" evidence="4">
    <location>
        <position position="6"/>
    </location>
</feature>
<feature type="modified residue" description="N6-butyryllysine; alternate" evidence="1">
    <location>
        <position position="6"/>
    </location>
</feature>
<feature type="modified residue" description="N6-glutaryllysine; alternate" evidence="1">
    <location>
        <position position="6"/>
    </location>
</feature>
<feature type="modified residue" description="N6-lactoyllysine; alternate" evidence="1">
    <location>
        <position position="6"/>
    </location>
</feature>
<feature type="modified residue" description="N6-(2-hydroxyisobutyryl)lysine; alternate" evidence="1">
    <location>
        <position position="9"/>
    </location>
</feature>
<feature type="modified residue" description="N6-acetyllysine" evidence="4">
    <location>
        <position position="9"/>
    </location>
</feature>
<feature type="modified residue" description="N6-butyryllysine; alternate" evidence="1">
    <location>
        <position position="9"/>
    </location>
</feature>
<feature type="modified residue" description="N6-lactoyllysine; alternate" evidence="1">
    <location>
        <position position="9"/>
    </location>
</feature>
<feature type="modified residue" description="N6-propionyllysine; alternate" evidence="1">
    <location>
        <position position="9"/>
    </location>
</feature>
<feature type="modified residue" description="N6-(2-hydroxyisobutyryl)lysine; alternate" evidence="1">
    <location>
        <position position="13"/>
    </location>
</feature>
<feature type="modified residue" description="N6-acetyl-N6-methyllysine; alternate" evidence="1">
    <location>
        <position position="13"/>
    </location>
</feature>
<feature type="modified residue" description="N6-acetyllysine" evidence="4">
    <location>
        <position position="13"/>
    </location>
</feature>
<feature type="modified residue" description="N6-butyryllysine; alternate" evidence="1">
    <location>
        <position position="13"/>
    </location>
</feature>
<feature type="modified residue" description="N6-glutaryllysine; alternate" evidence="1">
    <location>
        <position position="13"/>
    </location>
</feature>
<feature type="modified residue" description="N6-lactoyllysine; alternate" evidence="1">
    <location>
        <position position="13"/>
    </location>
</feature>
<feature type="modified residue" description="N6-methyllysine; alternate" evidence="1">
    <location>
        <position position="13"/>
    </location>
</feature>
<feature type="modified residue" description="N6-(2-hydroxyisobutyryl)lysine; alternate" evidence="1">
    <location>
        <position position="17"/>
    </location>
</feature>
<feature type="modified residue" description="N6-acetyllysine" evidence="4">
    <location>
        <position position="17"/>
    </location>
</feature>
<feature type="modified residue" description="N6-butyryllysine; alternate" evidence="1">
    <location>
        <position position="17"/>
    </location>
</feature>
<feature type="modified residue" description="N6-lactoyllysine; alternate" evidence="1">
    <location>
        <position position="17"/>
    </location>
</feature>
<feature type="modified residue" description="N6-propionyllysine; alternate" evidence="1">
    <location>
        <position position="17"/>
    </location>
</feature>
<feature type="modified residue" description="N6,N6,N6-trimethyllysine; alternate" evidence="1">
    <location>
        <position position="21"/>
    </location>
</feature>
<feature type="modified residue" description="N6,N6-dimethyllysine; alternate" evidence="1">
    <location>
        <position position="21"/>
    </location>
</feature>
<feature type="modified residue" description="N6-methyllysine; alternate" evidence="1">
    <location>
        <position position="21"/>
    </location>
</feature>
<feature type="modified residue" description="N6-(2-hydroxyisobutyryl)lysine; alternate" evidence="1">
    <location>
        <position position="32"/>
    </location>
</feature>
<feature type="modified residue" description="N6-acetyllysine" evidence="1">
    <location>
        <position position="32"/>
    </location>
</feature>
<feature type="modified residue" description="N6-butyryllysine; alternate" evidence="1">
    <location>
        <position position="32"/>
    </location>
</feature>
<feature type="modified residue" description="N6-glutaryllysine; alternate" evidence="1">
    <location>
        <position position="32"/>
    </location>
</feature>
<feature type="modified residue" description="N6-lactoyllysine; alternate" evidence="1">
    <location>
        <position position="32"/>
    </location>
</feature>
<feature type="modified residue" description="N6-propionyllysine; alternate" evidence="1">
    <location>
        <position position="32"/>
    </location>
</feature>
<feature type="modified residue" description="N6-succinyllysine; alternate" evidence="1">
    <location>
        <position position="32"/>
    </location>
</feature>
<feature type="modified residue" description="N6-(2-hydroxyisobutyryl)lysine; alternate" evidence="1">
    <location>
        <position position="45"/>
    </location>
</feature>
<feature type="modified residue" description="N6-butyryllysine; alternate" evidence="1">
    <location>
        <position position="45"/>
    </location>
</feature>
<feature type="modified residue" description="N6-propionyllysine; alternate" evidence="1">
    <location>
        <position position="45"/>
    </location>
</feature>
<feature type="modified residue" description="Phosphoserine; by PAK2" evidence="1">
    <location>
        <position position="48"/>
    </location>
</feature>
<feature type="modified residue" description="Phosphotyrosine" evidence="1">
    <location>
        <position position="52"/>
    </location>
</feature>
<feature type="modified residue" description="N6-(2-hydroxyisobutyryl)lysine" evidence="1">
    <location>
        <position position="60"/>
    </location>
</feature>
<feature type="modified residue" description="N6-acetyllysine" evidence="1">
    <location>
        <position position="60"/>
    </location>
</feature>
<feature type="modified residue" description="N6-glutaryllysine; alternate" evidence="1">
    <location>
        <position position="60"/>
    </location>
</feature>
<feature type="modified residue" description="N6-(2-hydroxyisobutyryl)lysine; alternate" evidence="1">
    <location>
        <position position="78"/>
    </location>
</feature>
<feature type="modified residue" description="N6-butyryllysine; alternate" evidence="1">
    <location>
        <position position="78"/>
    </location>
</feature>
<feature type="modified residue" description="N6-glutaryllysine; alternate" evidence="1">
    <location>
        <position position="78"/>
    </location>
</feature>
<feature type="modified residue" description="N6-lactoyllysine; alternate" evidence="1">
    <location>
        <position position="78"/>
    </location>
</feature>
<feature type="modified residue" description="N6-propionyllysine; alternate" evidence="1">
    <location>
        <position position="78"/>
    </location>
</feature>
<feature type="modified residue" description="N6-succinyllysine" evidence="1">
    <location>
        <position position="78"/>
    </location>
</feature>
<feature type="modified residue" description="N6-(2-hydroxyisobutyryl)lysine; alternate" evidence="1">
    <location>
        <position position="80"/>
    </location>
</feature>
<feature type="modified residue" description="N6-acetyllysine" evidence="1">
    <location>
        <position position="80"/>
    </location>
</feature>
<feature type="modified residue" description="N6-butyryllysine; alternate" evidence="1">
    <location>
        <position position="80"/>
    </location>
</feature>
<feature type="modified residue" description="N6-glutaryllysine; alternate" evidence="1">
    <location>
        <position position="80"/>
    </location>
</feature>
<feature type="modified residue" description="N6-propionyllysine; alternate" evidence="1">
    <location>
        <position position="80"/>
    </location>
</feature>
<feature type="modified residue" description="Phosphotyrosine" evidence="1">
    <location>
        <position position="89"/>
    </location>
</feature>
<feature type="modified residue" description="N6-(2-hydroxyisobutyryl)lysine; alternate" evidence="1">
    <location>
        <position position="92"/>
    </location>
</feature>
<feature type="modified residue" description="N6-acetyllysine; alternate" evidence="1">
    <location>
        <position position="92"/>
    </location>
</feature>
<feature type="modified residue" description="N6-butyryllysine; alternate" evidence="1">
    <location>
        <position position="92"/>
    </location>
</feature>
<feature type="modified residue" description="N6-glutaryllysine; alternate" evidence="1">
    <location>
        <position position="92"/>
    </location>
</feature>
<feature type="modified residue" description="N6-lactoyllysine; alternate" evidence="1">
    <location>
        <position position="92"/>
    </location>
</feature>
<feature type="modified residue" description="N6-propionyllysine; alternate" evidence="1">
    <location>
        <position position="92"/>
    </location>
</feature>
<feature type="modified residue" description="N6-succinyllysine; alternate" evidence="1">
    <location>
        <position position="92"/>
    </location>
</feature>
<feature type="cross-link" description="Glycyl lysine isopeptide (Lys-Gly) (interchain with G-Cter in UFM1); alternate" evidence="1">
    <location>
        <position position="32"/>
    </location>
</feature>
<feature type="cross-link" description="Glycyl lysine isopeptide (Lys-Gly) (interchain with G-Cter in ubiquitin); alternate" evidence="1">
    <location>
        <position position="92"/>
    </location>
</feature>
<reference key="1">
    <citation type="journal article" date="1985" name="J. Mol. Evol.">
        <title>Histone H4 and H2B genes in rainbow trout (Salmo gairdnerii).</title>
        <authorList>
            <person name="Winkfein R.J."/>
            <person name="Connor W."/>
            <person name="Mezquita J."/>
            <person name="Dixon G.H."/>
        </authorList>
    </citation>
    <scope>NUCLEOTIDE SEQUENCE [GENOMIC DNA]</scope>
</reference>
<reference key="2">
    <citation type="journal article" date="1971" name="J. Biol. Chem.">
        <title>Sites of in vivo acetylation in trout testis histone IV.</title>
        <authorList>
            <person name="Candido E.P.M."/>
            <person name="Dixon G.H."/>
        </authorList>
    </citation>
    <scope>PROTEIN SEQUENCE OF 2-22</scope>
    <scope>ACETYLATION AT SER-2; LYS-6; LYS-9; LYS-13 AND LYS-17</scope>
</reference>
<accession>P62797</accession>
<accession>P02304</accession>
<accession>P02305</accession>
<keyword id="KW-0007">Acetylation</keyword>
<keyword id="KW-0158">Chromosome</keyword>
<keyword id="KW-0164">Citrullination</keyword>
<keyword id="KW-0903">Direct protein sequencing</keyword>
<keyword id="KW-0238">DNA-binding</keyword>
<keyword id="KW-0379">Hydroxylation</keyword>
<keyword id="KW-1017">Isopeptide bond</keyword>
<keyword id="KW-0488">Methylation</keyword>
<keyword id="KW-0544">Nucleosome core</keyword>
<keyword id="KW-0539">Nucleus</keyword>
<keyword id="KW-0597">Phosphoprotein</keyword>
<keyword id="KW-0832">Ubl conjugation</keyword>
<comment type="function">
    <text>Core component of nucleosome. Nucleosomes wrap and compact DNA into chromatin, limiting DNA accessibility to the cellular machineries which require DNA as a template. Histones thereby play a central role in transcription regulation, DNA repair, DNA replication and chromosomal stability. DNA accessibility is regulated via a complex set of post-translational modifications of histones, also called histone code, and nucleosome remodeling.</text>
</comment>
<comment type="subunit">
    <text>The nucleosome is a histone octamer containing two molecules each of H2A, H2B, H3 and H4 assembled in one H3-H4 heterotetramer and two H2A-H2B heterodimers. The octamer wraps approximately 147 bp of DNA.</text>
</comment>
<comment type="subcellular location">
    <subcellularLocation>
        <location>Nucleus</location>
    </subcellularLocation>
    <subcellularLocation>
        <location>Chromosome</location>
    </subcellularLocation>
</comment>
<comment type="PTM">
    <text evidence="1">Acetylation at Lys-6 (H4K5ac), Lys-9 (H4K8ac), Lys-13 (H4K12ac) and Lys-17 (H4K16ac) occurs in coding regions of the genome but not in heterochromatin.</text>
</comment>
<comment type="PTM">
    <text evidence="1">Citrullination at Arg-4 (H4R3ci) by PADI4 impairs methylation.</text>
</comment>
<comment type="PTM">
    <text evidence="1">Monomethylation and asymmetric dimethylation at Arg-4 (H4R3me1 and H4R3me2a, respectively) by PRMT1 favors acetylation at Lys-9 (H4K8ac) and Lys-13 (H4K12ac). Demethylation is performed by JMJD6. Symmetric dimethylation on Arg-4 (H4R3me2s) by the PRDM1/PRMT5 complex may play a crucial role in the germ-cell lineage (By similarity).</text>
</comment>
<comment type="PTM">
    <text evidence="1">Monomethylated, dimethylated or trimethylated at Lys-21 (H4K20me1, H4K20me2, H4K20me3). Monomethylation is performed by KMT5A/SET8. Trimethylation is performed by KMT5B and KMT5C and induces gene silencing. Monomethylated at Lys-13 (H4K12me1) by N6AMT1; H4K12me1 modification is present at the promoters of numerous genes encoding cell cycle regulators.</text>
</comment>
<comment type="PTM">
    <text evidence="1">Acetyl-methylated at Lys-6 and Lys-13 (H4K5acme and H4K12acme, respectively), acetyl-methylation is an epigenetic mark of active chromatin associated with increased transcriptional initiation. Acetyl-methylation is formed by acetylation by EP300/p300 of lysine residues that are already monomethylated on the same side chain. H4K5acme and H4K12acme marks specifically bind BRD2.</text>
</comment>
<comment type="PTM">
    <text evidence="1">Phosphorylated by pak2 at Ser-48 (H4S47ph). This phosphorylation increases the association of H3.3-H4 with the histone chaperone HIRA, thus promoting nucleosome assembly of H3.3-H4 and inhibiting nucleosome assembly of H3.1-H4 (By similarity).</text>
</comment>
<comment type="PTM">
    <text evidence="1">Ubiquitinated by the CUL4-DDB-RBX1 complex in response to ultraviolet irradiation. This may weaken the interaction between histones and DNA and facilitate DNA accessibility to repair proteins. Monoubiquitinated at Lys-92 of histone H4 (H4K91ub1) in response to DNA damage. The exact role of H4K91ub1 in DNA damage response is still unclear but it may function as a licensing signal for additional histone H4 post-translational modifications such as H4 Lys-21 methylation (H4K20me) (By similarity).</text>
</comment>
<comment type="PTM">
    <text evidence="1">Sumoylated, which is associated with transcriptional repression.</text>
</comment>
<comment type="PTM">
    <text evidence="2">Butyrylation of histones marks active promoters and competes with histone acetylation.</text>
</comment>
<comment type="PTM">
    <text evidence="1">Glutarylation at Lys-92 (H4K91glu) destabilizes nucleosomes by promoting dissociation of the H2A-H2B dimers from nucleosomes.</text>
</comment>
<comment type="PTM">
    <text evidence="1">Ufmylated; monofmylated by UFL1 at Lys-32 (H4K31Ufm1) in response to DNA damage.</text>
</comment>
<comment type="PTM">
    <text evidence="1">Lactylated in macrophages by EP300/P300 by using lactoyl-CoA directly derived from endogenous or exogenous lactate, leading to stimulates gene transcription. Delactylated by SIRT3 at Lys-17 (H4K16la).</text>
</comment>
<comment type="similarity">
    <text evidence="5">Belongs to the histone H4 family.</text>
</comment>
<name>H4_ONCMY</name>
<organism>
    <name type="scientific">Oncorhynchus mykiss</name>
    <name type="common">Rainbow trout</name>
    <name type="synonym">Salmo gairdneri</name>
    <dbReference type="NCBI Taxonomy" id="8022"/>
    <lineage>
        <taxon>Eukaryota</taxon>
        <taxon>Metazoa</taxon>
        <taxon>Chordata</taxon>
        <taxon>Craniata</taxon>
        <taxon>Vertebrata</taxon>
        <taxon>Euteleostomi</taxon>
        <taxon>Actinopterygii</taxon>
        <taxon>Neopterygii</taxon>
        <taxon>Teleostei</taxon>
        <taxon>Protacanthopterygii</taxon>
        <taxon>Salmoniformes</taxon>
        <taxon>Salmonidae</taxon>
        <taxon>Salmoninae</taxon>
        <taxon>Oncorhynchus</taxon>
    </lineage>
</organism>